<gene>
    <name evidence="1" type="primary">folD</name>
    <name type="ordered locus">Ldb1425</name>
</gene>
<protein>
    <recommendedName>
        <fullName evidence="1">Bifunctional protein FolD</fullName>
    </recommendedName>
    <domain>
        <recommendedName>
            <fullName evidence="1">Methylenetetrahydrofolate dehydrogenase</fullName>
            <ecNumber evidence="1">1.5.1.5</ecNumber>
        </recommendedName>
    </domain>
    <domain>
        <recommendedName>
            <fullName evidence="1">Methenyltetrahydrofolate cyclohydrolase</fullName>
            <ecNumber evidence="1">3.5.4.9</ecNumber>
        </recommendedName>
    </domain>
</protein>
<proteinExistence type="inferred from homology"/>
<comment type="function">
    <text evidence="1">Catalyzes the oxidation of 5,10-methylenetetrahydrofolate to 5,10-methenyltetrahydrofolate and then the hydrolysis of 5,10-methenyltetrahydrofolate to 10-formyltetrahydrofolate.</text>
</comment>
<comment type="catalytic activity">
    <reaction evidence="1">
        <text>(6R)-5,10-methylene-5,6,7,8-tetrahydrofolate + NADP(+) = (6R)-5,10-methenyltetrahydrofolate + NADPH</text>
        <dbReference type="Rhea" id="RHEA:22812"/>
        <dbReference type="ChEBI" id="CHEBI:15636"/>
        <dbReference type="ChEBI" id="CHEBI:57455"/>
        <dbReference type="ChEBI" id="CHEBI:57783"/>
        <dbReference type="ChEBI" id="CHEBI:58349"/>
        <dbReference type="EC" id="1.5.1.5"/>
    </reaction>
</comment>
<comment type="catalytic activity">
    <reaction evidence="1">
        <text>(6R)-5,10-methenyltetrahydrofolate + H2O = (6R)-10-formyltetrahydrofolate + H(+)</text>
        <dbReference type="Rhea" id="RHEA:23700"/>
        <dbReference type="ChEBI" id="CHEBI:15377"/>
        <dbReference type="ChEBI" id="CHEBI:15378"/>
        <dbReference type="ChEBI" id="CHEBI:57455"/>
        <dbReference type="ChEBI" id="CHEBI:195366"/>
        <dbReference type="EC" id="3.5.4.9"/>
    </reaction>
</comment>
<comment type="pathway">
    <text evidence="1">One-carbon metabolism; tetrahydrofolate interconversion.</text>
</comment>
<comment type="subunit">
    <text evidence="1">Homodimer.</text>
</comment>
<comment type="similarity">
    <text evidence="1">Belongs to the tetrahydrofolate dehydrogenase/cyclohydrolase family.</text>
</comment>
<name>FOLD_LACDA</name>
<sequence length="283" mass="30635">MGEILDGKKLAWELGEKLGSEVDSLKEHGVSPKLCVINIGDDPASKVYVASKKRKAEKLGIKQVVYQLPADESEEDVLKLIDSLNADPEVSSLMVQLPVPPQINADRVIERIDPEKDVDCLTPANIGRLWQGKHFVEPATAAGIIALLDHYQIDLTGKNAVIVGRSNIVGKPLAALMLERNASVSILHSRSRNLADLTKQADILVCAVGKAEMIKADMVKEGAVVIDVGINRVDGHLVGDVDFAPVKEKASWITPVPGGVGPLTVEFLMEEVIKLTRRQHGLD</sequence>
<reference key="1">
    <citation type="journal article" date="2006" name="Proc. Natl. Acad. Sci. U.S.A.">
        <title>The complete genome sequence of Lactobacillus bulgaricus reveals extensive and ongoing reductive evolution.</title>
        <authorList>
            <person name="van de Guchte M."/>
            <person name="Penaud S."/>
            <person name="Grimaldi C."/>
            <person name="Barbe V."/>
            <person name="Bryson K."/>
            <person name="Nicolas P."/>
            <person name="Robert C."/>
            <person name="Oztas S."/>
            <person name="Mangenot S."/>
            <person name="Couloux A."/>
            <person name="Loux V."/>
            <person name="Dervyn R."/>
            <person name="Bossy R."/>
            <person name="Bolotin A."/>
            <person name="Batto J.-M."/>
            <person name="Walunas T."/>
            <person name="Gibrat J.-F."/>
            <person name="Bessieres P."/>
            <person name="Weissenbach J."/>
            <person name="Ehrlich S.D."/>
            <person name="Maguin E."/>
        </authorList>
    </citation>
    <scope>NUCLEOTIDE SEQUENCE [LARGE SCALE GENOMIC DNA]</scope>
    <source>
        <strain>ATCC 11842 / DSM 20081 / BCRC 10696 / JCM 1002 / NBRC 13953 / NCIMB 11778 / NCTC 12712 / WDCM 00102 / Lb 14</strain>
    </source>
</reference>
<accession>Q1G9H1</accession>
<organism>
    <name type="scientific">Lactobacillus delbrueckii subsp. bulgaricus (strain ATCC 11842 / DSM 20081 / BCRC 10696 / JCM 1002 / NBRC 13953 / NCIMB 11778 / NCTC 12712 / WDCM 00102 / Lb 14)</name>
    <dbReference type="NCBI Taxonomy" id="390333"/>
    <lineage>
        <taxon>Bacteria</taxon>
        <taxon>Bacillati</taxon>
        <taxon>Bacillota</taxon>
        <taxon>Bacilli</taxon>
        <taxon>Lactobacillales</taxon>
        <taxon>Lactobacillaceae</taxon>
        <taxon>Lactobacillus</taxon>
    </lineage>
</organism>
<evidence type="ECO:0000255" key="1">
    <source>
        <dbReference type="HAMAP-Rule" id="MF_01576"/>
    </source>
</evidence>
<keyword id="KW-0028">Amino-acid biosynthesis</keyword>
<keyword id="KW-0368">Histidine biosynthesis</keyword>
<keyword id="KW-0378">Hydrolase</keyword>
<keyword id="KW-0486">Methionine biosynthesis</keyword>
<keyword id="KW-0511">Multifunctional enzyme</keyword>
<keyword id="KW-0521">NADP</keyword>
<keyword id="KW-0554">One-carbon metabolism</keyword>
<keyword id="KW-0560">Oxidoreductase</keyword>
<keyword id="KW-0658">Purine biosynthesis</keyword>
<keyword id="KW-1185">Reference proteome</keyword>
<dbReference type="EC" id="1.5.1.5" evidence="1"/>
<dbReference type="EC" id="3.5.4.9" evidence="1"/>
<dbReference type="EMBL" id="CR954253">
    <property type="protein sequence ID" value="CAI98226.1"/>
    <property type="molecule type" value="Genomic_DNA"/>
</dbReference>
<dbReference type="RefSeq" id="WP_011544047.1">
    <property type="nucleotide sequence ID" value="NC_008054.1"/>
</dbReference>
<dbReference type="SMR" id="Q1G9H1"/>
<dbReference type="STRING" id="390333.Ldb1425"/>
<dbReference type="KEGG" id="ldb:Ldb1425"/>
<dbReference type="PATRIC" id="fig|390333.13.peg.1943"/>
<dbReference type="eggNOG" id="COG0190">
    <property type="taxonomic scope" value="Bacteria"/>
</dbReference>
<dbReference type="HOGENOM" id="CLU_034045_2_1_9"/>
<dbReference type="BioCyc" id="LDEL390333:LDB_RS06125-MONOMER"/>
<dbReference type="UniPathway" id="UPA00193"/>
<dbReference type="Proteomes" id="UP000001259">
    <property type="component" value="Chromosome"/>
</dbReference>
<dbReference type="GO" id="GO:0005829">
    <property type="term" value="C:cytosol"/>
    <property type="evidence" value="ECO:0007669"/>
    <property type="project" value="TreeGrafter"/>
</dbReference>
<dbReference type="GO" id="GO:0004477">
    <property type="term" value="F:methenyltetrahydrofolate cyclohydrolase activity"/>
    <property type="evidence" value="ECO:0007669"/>
    <property type="project" value="UniProtKB-UniRule"/>
</dbReference>
<dbReference type="GO" id="GO:0004488">
    <property type="term" value="F:methylenetetrahydrofolate dehydrogenase (NADP+) activity"/>
    <property type="evidence" value="ECO:0007669"/>
    <property type="project" value="UniProtKB-UniRule"/>
</dbReference>
<dbReference type="GO" id="GO:0000105">
    <property type="term" value="P:L-histidine biosynthetic process"/>
    <property type="evidence" value="ECO:0007669"/>
    <property type="project" value="UniProtKB-KW"/>
</dbReference>
<dbReference type="GO" id="GO:0009086">
    <property type="term" value="P:methionine biosynthetic process"/>
    <property type="evidence" value="ECO:0007669"/>
    <property type="project" value="UniProtKB-KW"/>
</dbReference>
<dbReference type="GO" id="GO:0006164">
    <property type="term" value="P:purine nucleotide biosynthetic process"/>
    <property type="evidence" value="ECO:0007669"/>
    <property type="project" value="UniProtKB-KW"/>
</dbReference>
<dbReference type="GO" id="GO:0035999">
    <property type="term" value="P:tetrahydrofolate interconversion"/>
    <property type="evidence" value="ECO:0007669"/>
    <property type="project" value="UniProtKB-UniRule"/>
</dbReference>
<dbReference type="CDD" id="cd01080">
    <property type="entry name" value="NAD_bind_m-THF_DH_Cyclohyd"/>
    <property type="match status" value="1"/>
</dbReference>
<dbReference type="FunFam" id="3.40.50.720:FF:000094">
    <property type="entry name" value="Bifunctional protein FolD"/>
    <property type="match status" value="1"/>
</dbReference>
<dbReference type="FunFam" id="3.40.50.10860:FF:000005">
    <property type="entry name" value="C-1-tetrahydrofolate synthase, cytoplasmic, putative"/>
    <property type="match status" value="1"/>
</dbReference>
<dbReference type="Gene3D" id="3.40.50.10860">
    <property type="entry name" value="Leucine Dehydrogenase, chain A, domain 1"/>
    <property type="match status" value="1"/>
</dbReference>
<dbReference type="Gene3D" id="3.40.50.720">
    <property type="entry name" value="NAD(P)-binding Rossmann-like Domain"/>
    <property type="match status" value="1"/>
</dbReference>
<dbReference type="HAMAP" id="MF_01576">
    <property type="entry name" value="THF_DHG_CYH"/>
    <property type="match status" value="1"/>
</dbReference>
<dbReference type="InterPro" id="IPR046346">
    <property type="entry name" value="Aminoacid_DH-like_N_sf"/>
</dbReference>
<dbReference type="InterPro" id="IPR036291">
    <property type="entry name" value="NAD(P)-bd_dom_sf"/>
</dbReference>
<dbReference type="InterPro" id="IPR000672">
    <property type="entry name" value="THF_DH/CycHdrlase"/>
</dbReference>
<dbReference type="InterPro" id="IPR020630">
    <property type="entry name" value="THF_DH/CycHdrlase_cat_dom"/>
</dbReference>
<dbReference type="InterPro" id="IPR020867">
    <property type="entry name" value="THF_DH/CycHdrlase_CS"/>
</dbReference>
<dbReference type="InterPro" id="IPR020631">
    <property type="entry name" value="THF_DH/CycHdrlase_NAD-bd_dom"/>
</dbReference>
<dbReference type="PANTHER" id="PTHR48099:SF5">
    <property type="entry name" value="C-1-TETRAHYDROFOLATE SYNTHASE, CYTOPLASMIC"/>
    <property type="match status" value="1"/>
</dbReference>
<dbReference type="PANTHER" id="PTHR48099">
    <property type="entry name" value="C-1-TETRAHYDROFOLATE SYNTHASE, CYTOPLASMIC-RELATED"/>
    <property type="match status" value="1"/>
</dbReference>
<dbReference type="Pfam" id="PF00763">
    <property type="entry name" value="THF_DHG_CYH"/>
    <property type="match status" value="1"/>
</dbReference>
<dbReference type="Pfam" id="PF02882">
    <property type="entry name" value="THF_DHG_CYH_C"/>
    <property type="match status" value="1"/>
</dbReference>
<dbReference type="PRINTS" id="PR00085">
    <property type="entry name" value="THFDHDRGNASE"/>
</dbReference>
<dbReference type="SUPFAM" id="SSF53223">
    <property type="entry name" value="Aminoacid dehydrogenase-like, N-terminal domain"/>
    <property type="match status" value="1"/>
</dbReference>
<dbReference type="SUPFAM" id="SSF51735">
    <property type="entry name" value="NAD(P)-binding Rossmann-fold domains"/>
    <property type="match status" value="1"/>
</dbReference>
<dbReference type="PROSITE" id="PS00766">
    <property type="entry name" value="THF_DHG_CYH_1"/>
    <property type="match status" value="1"/>
</dbReference>
<feature type="chain" id="PRO_0000268374" description="Bifunctional protein FolD">
    <location>
        <begin position="1"/>
        <end position="283"/>
    </location>
</feature>
<feature type="binding site" evidence="1">
    <location>
        <begin position="164"/>
        <end position="166"/>
    </location>
    <ligand>
        <name>NADP(+)</name>
        <dbReference type="ChEBI" id="CHEBI:58349"/>
    </ligand>
</feature>
<feature type="binding site" evidence="1">
    <location>
        <position position="189"/>
    </location>
    <ligand>
        <name>NADP(+)</name>
        <dbReference type="ChEBI" id="CHEBI:58349"/>
    </ligand>
</feature>
<feature type="binding site" evidence="1">
    <location>
        <position position="230"/>
    </location>
    <ligand>
        <name>NADP(+)</name>
        <dbReference type="ChEBI" id="CHEBI:58349"/>
    </ligand>
</feature>